<sequence length="89" mass="10353">MSITAEEKTRLMKEFATKEGDTGSPEVQVAILTSRINTLTEHFKTHKKDNHGRRGLLKMVAQRRKLLDYLKGKEEARYQDLIKKLGIRR</sequence>
<accession>Q1GKK2</accession>
<organism>
    <name type="scientific">Ruegeria sp. (strain TM1040)</name>
    <name type="common">Silicibacter sp.</name>
    <dbReference type="NCBI Taxonomy" id="292414"/>
    <lineage>
        <taxon>Bacteria</taxon>
        <taxon>Pseudomonadati</taxon>
        <taxon>Pseudomonadota</taxon>
        <taxon>Alphaproteobacteria</taxon>
        <taxon>Rhodobacterales</taxon>
        <taxon>Roseobacteraceae</taxon>
        <taxon>Ruegeria</taxon>
    </lineage>
</organism>
<keyword id="KW-1185">Reference proteome</keyword>
<keyword id="KW-0687">Ribonucleoprotein</keyword>
<keyword id="KW-0689">Ribosomal protein</keyword>
<keyword id="KW-0694">RNA-binding</keyword>
<keyword id="KW-0699">rRNA-binding</keyword>
<feature type="chain" id="PRO_0000255530" description="Small ribosomal subunit protein uS15">
    <location>
        <begin position="1"/>
        <end position="89"/>
    </location>
</feature>
<dbReference type="EMBL" id="CP000377">
    <property type="protein sequence ID" value="ABF62814.1"/>
    <property type="molecule type" value="Genomic_DNA"/>
</dbReference>
<dbReference type="RefSeq" id="WP_005607207.1">
    <property type="nucleotide sequence ID" value="NC_008044.1"/>
</dbReference>
<dbReference type="SMR" id="Q1GKK2"/>
<dbReference type="STRING" id="292414.TM1040_0081"/>
<dbReference type="GeneID" id="28248260"/>
<dbReference type="KEGG" id="sit:TM1040_0081"/>
<dbReference type="eggNOG" id="COG0184">
    <property type="taxonomic scope" value="Bacteria"/>
</dbReference>
<dbReference type="HOGENOM" id="CLU_148518_0_0_5"/>
<dbReference type="OrthoDB" id="9799262at2"/>
<dbReference type="Proteomes" id="UP000000636">
    <property type="component" value="Chromosome"/>
</dbReference>
<dbReference type="GO" id="GO:0022627">
    <property type="term" value="C:cytosolic small ribosomal subunit"/>
    <property type="evidence" value="ECO:0007669"/>
    <property type="project" value="TreeGrafter"/>
</dbReference>
<dbReference type="GO" id="GO:0019843">
    <property type="term" value="F:rRNA binding"/>
    <property type="evidence" value="ECO:0007669"/>
    <property type="project" value="UniProtKB-UniRule"/>
</dbReference>
<dbReference type="GO" id="GO:0003735">
    <property type="term" value="F:structural constituent of ribosome"/>
    <property type="evidence" value="ECO:0007669"/>
    <property type="project" value="InterPro"/>
</dbReference>
<dbReference type="GO" id="GO:0006412">
    <property type="term" value="P:translation"/>
    <property type="evidence" value="ECO:0007669"/>
    <property type="project" value="UniProtKB-UniRule"/>
</dbReference>
<dbReference type="CDD" id="cd00353">
    <property type="entry name" value="Ribosomal_S15p_S13e"/>
    <property type="match status" value="1"/>
</dbReference>
<dbReference type="FunFam" id="1.10.287.10:FF:000002">
    <property type="entry name" value="30S ribosomal protein S15"/>
    <property type="match status" value="1"/>
</dbReference>
<dbReference type="Gene3D" id="6.10.250.3130">
    <property type="match status" value="1"/>
</dbReference>
<dbReference type="Gene3D" id="1.10.287.10">
    <property type="entry name" value="S15/NS1, RNA-binding"/>
    <property type="match status" value="1"/>
</dbReference>
<dbReference type="HAMAP" id="MF_01343_B">
    <property type="entry name" value="Ribosomal_uS15_B"/>
    <property type="match status" value="1"/>
</dbReference>
<dbReference type="InterPro" id="IPR000589">
    <property type="entry name" value="Ribosomal_uS15"/>
</dbReference>
<dbReference type="InterPro" id="IPR005290">
    <property type="entry name" value="Ribosomal_uS15_bac-type"/>
</dbReference>
<dbReference type="InterPro" id="IPR009068">
    <property type="entry name" value="uS15_NS1_RNA-bd_sf"/>
</dbReference>
<dbReference type="NCBIfam" id="TIGR00952">
    <property type="entry name" value="S15_bact"/>
    <property type="match status" value="1"/>
</dbReference>
<dbReference type="PANTHER" id="PTHR23321">
    <property type="entry name" value="RIBOSOMAL PROTEIN S15, BACTERIAL AND ORGANELLAR"/>
    <property type="match status" value="1"/>
</dbReference>
<dbReference type="PANTHER" id="PTHR23321:SF26">
    <property type="entry name" value="SMALL RIBOSOMAL SUBUNIT PROTEIN US15M"/>
    <property type="match status" value="1"/>
</dbReference>
<dbReference type="Pfam" id="PF00312">
    <property type="entry name" value="Ribosomal_S15"/>
    <property type="match status" value="1"/>
</dbReference>
<dbReference type="SMART" id="SM01387">
    <property type="entry name" value="Ribosomal_S15"/>
    <property type="match status" value="1"/>
</dbReference>
<dbReference type="SUPFAM" id="SSF47060">
    <property type="entry name" value="S15/NS1 RNA-binding domain"/>
    <property type="match status" value="1"/>
</dbReference>
<dbReference type="PROSITE" id="PS00362">
    <property type="entry name" value="RIBOSOMAL_S15"/>
    <property type="match status" value="1"/>
</dbReference>
<reference key="1">
    <citation type="submission" date="2006-05" db="EMBL/GenBank/DDBJ databases">
        <title>Complete sequence of chromosome of Silicibacter sp. TM1040.</title>
        <authorList>
            <consortium name="US DOE Joint Genome Institute"/>
            <person name="Copeland A."/>
            <person name="Lucas S."/>
            <person name="Lapidus A."/>
            <person name="Barry K."/>
            <person name="Detter J.C."/>
            <person name="Glavina del Rio T."/>
            <person name="Hammon N."/>
            <person name="Israni S."/>
            <person name="Dalin E."/>
            <person name="Tice H."/>
            <person name="Pitluck S."/>
            <person name="Brettin T."/>
            <person name="Bruce D."/>
            <person name="Han C."/>
            <person name="Tapia R."/>
            <person name="Goodwin L."/>
            <person name="Thompson L.S."/>
            <person name="Gilna P."/>
            <person name="Schmutz J."/>
            <person name="Larimer F."/>
            <person name="Land M."/>
            <person name="Hauser L."/>
            <person name="Kyrpides N."/>
            <person name="Kim E."/>
            <person name="Belas R."/>
            <person name="Moran M.A."/>
            <person name="Buchan A."/>
            <person name="Gonzalez J.M."/>
            <person name="Schell M.A."/>
            <person name="Sun F."/>
            <person name="Richardson P."/>
        </authorList>
    </citation>
    <scope>NUCLEOTIDE SEQUENCE [LARGE SCALE GENOMIC DNA]</scope>
    <source>
        <strain>TM1040</strain>
    </source>
</reference>
<name>RS15_RUEST</name>
<gene>
    <name evidence="1" type="primary">rpsO</name>
    <name type="ordered locus">TM1040_0081</name>
</gene>
<protein>
    <recommendedName>
        <fullName evidence="1">Small ribosomal subunit protein uS15</fullName>
    </recommendedName>
    <alternativeName>
        <fullName evidence="2">30S ribosomal protein S15</fullName>
    </alternativeName>
</protein>
<comment type="function">
    <text evidence="1">One of the primary rRNA binding proteins, it binds directly to 16S rRNA where it helps nucleate assembly of the platform of the 30S subunit by binding and bridging several RNA helices of the 16S rRNA.</text>
</comment>
<comment type="function">
    <text evidence="1">Forms an intersubunit bridge (bridge B4) with the 23S rRNA of the 50S subunit in the ribosome.</text>
</comment>
<comment type="subunit">
    <text evidence="1">Part of the 30S ribosomal subunit. Forms a bridge to the 50S subunit in the 70S ribosome, contacting the 23S rRNA.</text>
</comment>
<comment type="similarity">
    <text evidence="1">Belongs to the universal ribosomal protein uS15 family.</text>
</comment>
<proteinExistence type="inferred from homology"/>
<evidence type="ECO:0000255" key="1">
    <source>
        <dbReference type="HAMAP-Rule" id="MF_01343"/>
    </source>
</evidence>
<evidence type="ECO:0000305" key="2"/>